<feature type="chain" id="PRO_0000226577" description="Nucleoside diphosphate kinase">
    <location>
        <begin position="1"/>
        <end position="143"/>
    </location>
</feature>
<feature type="active site" description="Pros-phosphohistidine intermediate" evidence="1">
    <location>
        <position position="117"/>
    </location>
</feature>
<feature type="binding site" evidence="1">
    <location>
        <position position="11"/>
    </location>
    <ligand>
        <name>ATP</name>
        <dbReference type="ChEBI" id="CHEBI:30616"/>
    </ligand>
</feature>
<feature type="binding site" evidence="1">
    <location>
        <position position="59"/>
    </location>
    <ligand>
        <name>ATP</name>
        <dbReference type="ChEBI" id="CHEBI:30616"/>
    </ligand>
</feature>
<feature type="binding site" evidence="1">
    <location>
        <position position="87"/>
    </location>
    <ligand>
        <name>ATP</name>
        <dbReference type="ChEBI" id="CHEBI:30616"/>
    </ligand>
</feature>
<feature type="binding site" evidence="1">
    <location>
        <position position="93"/>
    </location>
    <ligand>
        <name>ATP</name>
        <dbReference type="ChEBI" id="CHEBI:30616"/>
    </ligand>
</feature>
<feature type="binding site" evidence="1">
    <location>
        <position position="104"/>
    </location>
    <ligand>
        <name>ATP</name>
        <dbReference type="ChEBI" id="CHEBI:30616"/>
    </ligand>
</feature>
<feature type="binding site" evidence="1">
    <location>
        <position position="114"/>
    </location>
    <ligand>
        <name>ATP</name>
        <dbReference type="ChEBI" id="CHEBI:30616"/>
    </ligand>
</feature>
<protein>
    <recommendedName>
        <fullName evidence="1">Nucleoside diphosphate kinase</fullName>
        <shortName evidence="1">NDK</shortName>
        <shortName evidence="1">NDP kinase</shortName>
        <ecNumber evidence="1">2.7.4.6</ecNumber>
    </recommendedName>
    <alternativeName>
        <fullName evidence="1">Nucleoside-2-P kinase</fullName>
    </alternativeName>
</protein>
<name>NDK_SHIBS</name>
<keyword id="KW-0067">ATP-binding</keyword>
<keyword id="KW-0963">Cytoplasm</keyword>
<keyword id="KW-0418">Kinase</keyword>
<keyword id="KW-0460">Magnesium</keyword>
<keyword id="KW-0479">Metal-binding</keyword>
<keyword id="KW-0546">Nucleotide metabolism</keyword>
<keyword id="KW-0547">Nucleotide-binding</keyword>
<keyword id="KW-0597">Phosphoprotein</keyword>
<keyword id="KW-0808">Transferase</keyword>
<dbReference type="EC" id="2.7.4.6" evidence="1"/>
<dbReference type="EMBL" id="CP000036">
    <property type="protein sequence ID" value="ABB67086.1"/>
    <property type="molecule type" value="Genomic_DNA"/>
</dbReference>
<dbReference type="RefSeq" id="WP_000963837.1">
    <property type="nucleotide sequence ID" value="NC_007613.1"/>
</dbReference>
<dbReference type="SMR" id="Q31XX2"/>
<dbReference type="GeneID" id="93774618"/>
<dbReference type="KEGG" id="sbo:SBO_2542"/>
<dbReference type="HOGENOM" id="CLU_060216_8_1_6"/>
<dbReference type="Proteomes" id="UP000007067">
    <property type="component" value="Chromosome"/>
</dbReference>
<dbReference type="GO" id="GO:0005737">
    <property type="term" value="C:cytoplasm"/>
    <property type="evidence" value="ECO:0007669"/>
    <property type="project" value="UniProtKB-SubCell"/>
</dbReference>
<dbReference type="GO" id="GO:0005524">
    <property type="term" value="F:ATP binding"/>
    <property type="evidence" value="ECO:0007669"/>
    <property type="project" value="UniProtKB-UniRule"/>
</dbReference>
<dbReference type="GO" id="GO:0046872">
    <property type="term" value="F:metal ion binding"/>
    <property type="evidence" value="ECO:0007669"/>
    <property type="project" value="UniProtKB-KW"/>
</dbReference>
<dbReference type="GO" id="GO:0004550">
    <property type="term" value="F:nucleoside diphosphate kinase activity"/>
    <property type="evidence" value="ECO:0007669"/>
    <property type="project" value="UniProtKB-UniRule"/>
</dbReference>
<dbReference type="GO" id="GO:0006241">
    <property type="term" value="P:CTP biosynthetic process"/>
    <property type="evidence" value="ECO:0007669"/>
    <property type="project" value="UniProtKB-UniRule"/>
</dbReference>
<dbReference type="GO" id="GO:0006183">
    <property type="term" value="P:GTP biosynthetic process"/>
    <property type="evidence" value="ECO:0007669"/>
    <property type="project" value="UniProtKB-UniRule"/>
</dbReference>
<dbReference type="GO" id="GO:0006228">
    <property type="term" value="P:UTP biosynthetic process"/>
    <property type="evidence" value="ECO:0007669"/>
    <property type="project" value="UniProtKB-UniRule"/>
</dbReference>
<dbReference type="CDD" id="cd04413">
    <property type="entry name" value="NDPk_I"/>
    <property type="match status" value="1"/>
</dbReference>
<dbReference type="FunFam" id="3.30.70.141:FF:000001">
    <property type="entry name" value="Nucleoside diphosphate kinase"/>
    <property type="match status" value="1"/>
</dbReference>
<dbReference type="Gene3D" id="3.30.70.141">
    <property type="entry name" value="Nucleoside diphosphate kinase-like domain"/>
    <property type="match status" value="1"/>
</dbReference>
<dbReference type="HAMAP" id="MF_00451">
    <property type="entry name" value="NDP_kinase"/>
    <property type="match status" value="1"/>
</dbReference>
<dbReference type="InterPro" id="IPR034907">
    <property type="entry name" value="NDK-like_dom"/>
</dbReference>
<dbReference type="InterPro" id="IPR036850">
    <property type="entry name" value="NDK-like_dom_sf"/>
</dbReference>
<dbReference type="InterPro" id="IPR001564">
    <property type="entry name" value="Nucleoside_diP_kinase"/>
</dbReference>
<dbReference type="InterPro" id="IPR023005">
    <property type="entry name" value="Nucleoside_diP_kinase_AS"/>
</dbReference>
<dbReference type="NCBIfam" id="NF001908">
    <property type="entry name" value="PRK00668.1"/>
    <property type="match status" value="1"/>
</dbReference>
<dbReference type="PANTHER" id="PTHR46161">
    <property type="entry name" value="NUCLEOSIDE DIPHOSPHATE KINASE"/>
    <property type="match status" value="1"/>
</dbReference>
<dbReference type="PANTHER" id="PTHR46161:SF3">
    <property type="entry name" value="NUCLEOSIDE DIPHOSPHATE KINASE DDB_G0292928-RELATED"/>
    <property type="match status" value="1"/>
</dbReference>
<dbReference type="Pfam" id="PF00334">
    <property type="entry name" value="NDK"/>
    <property type="match status" value="1"/>
</dbReference>
<dbReference type="PRINTS" id="PR01243">
    <property type="entry name" value="NUCDPKINASE"/>
</dbReference>
<dbReference type="SMART" id="SM00562">
    <property type="entry name" value="NDK"/>
    <property type="match status" value="1"/>
</dbReference>
<dbReference type="SUPFAM" id="SSF54919">
    <property type="entry name" value="Nucleoside diphosphate kinase, NDK"/>
    <property type="match status" value="1"/>
</dbReference>
<dbReference type="PROSITE" id="PS00469">
    <property type="entry name" value="NDPK"/>
    <property type="match status" value="1"/>
</dbReference>
<dbReference type="PROSITE" id="PS51374">
    <property type="entry name" value="NDPK_LIKE"/>
    <property type="match status" value="1"/>
</dbReference>
<organism>
    <name type="scientific">Shigella boydii serotype 4 (strain Sb227)</name>
    <dbReference type="NCBI Taxonomy" id="300268"/>
    <lineage>
        <taxon>Bacteria</taxon>
        <taxon>Pseudomonadati</taxon>
        <taxon>Pseudomonadota</taxon>
        <taxon>Gammaproteobacteria</taxon>
        <taxon>Enterobacterales</taxon>
        <taxon>Enterobacteriaceae</taxon>
        <taxon>Shigella</taxon>
    </lineage>
</organism>
<gene>
    <name evidence="1" type="primary">ndk</name>
    <name type="ordered locus">SBO_2542</name>
</gene>
<proteinExistence type="inferred from homology"/>
<accession>Q31XX2</accession>
<comment type="function">
    <text evidence="1">Major role in the synthesis of nucleoside triphosphates other than ATP. The ATP gamma phosphate is transferred to the NDP beta phosphate via a ping-pong mechanism, using a phosphorylated active-site intermediate.</text>
</comment>
<comment type="catalytic activity">
    <reaction evidence="1">
        <text>a 2'-deoxyribonucleoside 5'-diphosphate + ATP = a 2'-deoxyribonucleoside 5'-triphosphate + ADP</text>
        <dbReference type="Rhea" id="RHEA:44640"/>
        <dbReference type="ChEBI" id="CHEBI:30616"/>
        <dbReference type="ChEBI" id="CHEBI:61560"/>
        <dbReference type="ChEBI" id="CHEBI:73316"/>
        <dbReference type="ChEBI" id="CHEBI:456216"/>
        <dbReference type="EC" id="2.7.4.6"/>
    </reaction>
</comment>
<comment type="catalytic activity">
    <reaction evidence="1">
        <text>a ribonucleoside 5'-diphosphate + ATP = a ribonucleoside 5'-triphosphate + ADP</text>
        <dbReference type="Rhea" id="RHEA:18113"/>
        <dbReference type="ChEBI" id="CHEBI:30616"/>
        <dbReference type="ChEBI" id="CHEBI:57930"/>
        <dbReference type="ChEBI" id="CHEBI:61557"/>
        <dbReference type="ChEBI" id="CHEBI:456216"/>
        <dbReference type="EC" id="2.7.4.6"/>
    </reaction>
</comment>
<comment type="cofactor">
    <cofactor evidence="1">
        <name>Mg(2+)</name>
        <dbReference type="ChEBI" id="CHEBI:18420"/>
    </cofactor>
</comment>
<comment type="subunit">
    <text evidence="1">Homotetramer.</text>
</comment>
<comment type="subcellular location">
    <subcellularLocation>
        <location evidence="1">Cytoplasm</location>
    </subcellularLocation>
</comment>
<comment type="similarity">
    <text evidence="1">Belongs to the NDK family.</text>
</comment>
<evidence type="ECO:0000255" key="1">
    <source>
        <dbReference type="HAMAP-Rule" id="MF_00451"/>
    </source>
</evidence>
<reference key="1">
    <citation type="journal article" date="2005" name="Nucleic Acids Res.">
        <title>Genome dynamics and diversity of Shigella species, the etiologic agents of bacillary dysentery.</title>
        <authorList>
            <person name="Yang F."/>
            <person name="Yang J."/>
            <person name="Zhang X."/>
            <person name="Chen L."/>
            <person name="Jiang Y."/>
            <person name="Yan Y."/>
            <person name="Tang X."/>
            <person name="Wang J."/>
            <person name="Xiong Z."/>
            <person name="Dong J."/>
            <person name="Xue Y."/>
            <person name="Zhu Y."/>
            <person name="Xu X."/>
            <person name="Sun L."/>
            <person name="Chen S."/>
            <person name="Nie H."/>
            <person name="Peng J."/>
            <person name="Xu J."/>
            <person name="Wang Y."/>
            <person name="Yuan Z."/>
            <person name="Wen Y."/>
            <person name="Yao Z."/>
            <person name="Shen Y."/>
            <person name="Qiang B."/>
            <person name="Hou Y."/>
            <person name="Yu J."/>
            <person name="Jin Q."/>
        </authorList>
    </citation>
    <scope>NUCLEOTIDE SEQUENCE [LARGE SCALE GENOMIC DNA]</scope>
    <source>
        <strain>Sb227</strain>
    </source>
</reference>
<sequence length="143" mass="15463">MAIERTFSIIKPNAVAKNVIGNIFARFEAAGFKIVGTKMLHLTVEQARGFYAEHDGKPFFDGLVEFMTSGPIVVSVLEGENAVQRHRDLLGATNPANALAGTLRADYADSLTENGTHGSDSVESAAREIAYFFGEGEVCPRTR</sequence>